<keyword id="KW-1015">Disulfide bond</keyword>
<keyword id="KW-0325">Glycoprotein</keyword>
<keyword id="KW-1199">Hemostasis impairing toxin</keyword>
<keyword id="KW-0378">Hydrolase</keyword>
<keyword id="KW-0645">Protease</keyword>
<keyword id="KW-0964">Secreted</keyword>
<keyword id="KW-0720">Serine protease</keyword>
<keyword id="KW-0732">Signal</keyword>
<keyword id="KW-0800">Toxin</keyword>
<keyword id="KW-0865">Zymogen</keyword>
<organism>
    <name type="scientific">Bothrops pictus</name>
    <name type="common">Desert lancehead</name>
    <dbReference type="NCBI Taxonomy" id="133440"/>
    <lineage>
        <taxon>Eukaryota</taxon>
        <taxon>Metazoa</taxon>
        <taxon>Chordata</taxon>
        <taxon>Craniata</taxon>
        <taxon>Vertebrata</taxon>
        <taxon>Euteleostomi</taxon>
        <taxon>Lepidosauria</taxon>
        <taxon>Squamata</taxon>
        <taxon>Bifurcata</taxon>
        <taxon>Unidentata</taxon>
        <taxon>Episquamata</taxon>
        <taxon>Toxicofera</taxon>
        <taxon>Serpentes</taxon>
        <taxon>Colubroidea</taxon>
        <taxon>Viperidae</taxon>
        <taxon>Crotalinae</taxon>
        <taxon>Bothrops</taxon>
    </lineage>
</organism>
<protein>
    <recommendedName>
        <fullName>Snake venom serine protease pictobin</fullName>
        <shortName>SVSP</shortName>
        <ecNumber>3.4.21.-</ecNumber>
    </recommendedName>
</protein>
<proteinExistence type="evidence at transcript level"/>
<sequence>ANLLILQVSYAQKSSELVIGGDECNINEHRFLAFTYSRGFFCGGTLINQEWVLTATHCDRIFMRIYLGLHNQSVRYDDQQIRYPKEKYFFPCSKNFTKWDKDIMLIRLDRPVKNSEHIAPLSLPSNPPSVGSVCRVMGWGTITAPNDTYPDVPHCANINLFNYTVCRGAYKGLPATSRTLCAGVLQGGIDTCVGDSGGPLICNGQFQGIVFWGGDPCAQPRKPALYTKVFDHLHWILSIIAGNTTATCPP</sequence>
<comment type="function">
    <text evidence="1">Snake venom serine protease that may impair the hemostatic system of the prey.</text>
</comment>
<comment type="subunit">
    <text evidence="1">Monomer.</text>
</comment>
<comment type="subcellular location">
    <subcellularLocation>
        <location evidence="1">Secreted</location>
    </subcellularLocation>
</comment>
<comment type="tissue specificity">
    <text evidence="4">Expressed by the venom gland.</text>
</comment>
<comment type="similarity">
    <text evidence="4">Belongs to the peptidase S1 family. Snake venom subfamily.</text>
</comment>
<dbReference type="EC" id="3.4.21.-"/>
<dbReference type="EMBL" id="KF410948">
    <property type="protein sequence ID" value="AGZ87932.1"/>
    <property type="molecule type" value="mRNA"/>
</dbReference>
<dbReference type="SMR" id="U5YCR8"/>
<dbReference type="GO" id="GO:0005576">
    <property type="term" value="C:extracellular region"/>
    <property type="evidence" value="ECO:0007669"/>
    <property type="project" value="UniProtKB-SubCell"/>
</dbReference>
<dbReference type="GO" id="GO:0030141">
    <property type="term" value="C:secretory granule"/>
    <property type="evidence" value="ECO:0007669"/>
    <property type="project" value="TreeGrafter"/>
</dbReference>
<dbReference type="GO" id="GO:0004252">
    <property type="term" value="F:serine-type endopeptidase activity"/>
    <property type="evidence" value="ECO:0007669"/>
    <property type="project" value="InterPro"/>
</dbReference>
<dbReference type="GO" id="GO:0090729">
    <property type="term" value="F:toxin activity"/>
    <property type="evidence" value="ECO:0007669"/>
    <property type="project" value="UniProtKB-KW"/>
</dbReference>
<dbReference type="GO" id="GO:0006508">
    <property type="term" value="P:proteolysis"/>
    <property type="evidence" value="ECO:0007669"/>
    <property type="project" value="UniProtKB-KW"/>
</dbReference>
<dbReference type="CDD" id="cd00190">
    <property type="entry name" value="Tryp_SPc"/>
    <property type="match status" value="1"/>
</dbReference>
<dbReference type="FunFam" id="2.40.10.10:FF:000158">
    <property type="entry name" value="Thrombin-like enzyme saxthrombin"/>
    <property type="match status" value="1"/>
</dbReference>
<dbReference type="FunFam" id="2.40.10.10:FF:000153">
    <property type="entry name" value="Venom plasminogen activator TSV-PA"/>
    <property type="match status" value="1"/>
</dbReference>
<dbReference type="Gene3D" id="2.40.10.10">
    <property type="entry name" value="Trypsin-like serine proteases"/>
    <property type="match status" value="2"/>
</dbReference>
<dbReference type="InterPro" id="IPR009003">
    <property type="entry name" value="Peptidase_S1_PA"/>
</dbReference>
<dbReference type="InterPro" id="IPR043504">
    <property type="entry name" value="Peptidase_S1_PA_chymotrypsin"/>
</dbReference>
<dbReference type="InterPro" id="IPR001314">
    <property type="entry name" value="Peptidase_S1A"/>
</dbReference>
<dbReference type="InterPro" id="IPR001254">
    <property type="entry name" value="Trypsin_dom"/>
</dbReference>
<dbReference type="InterPro" id="IPR018114">
    <property type="entry name" value="TRYPSIN_HIS"/>
</dbReference>
<dbReference type="InterPro" id="IPR033116">
    <property type="entry name" value="TRYPSIN_SER"/>
</dbReference>
<dbReference type="PANTHER" id="PTHR24271:SF47">
    <property type="entry name" value="KALLIKREIN-1"/>
    <property type="match status" value="1"/>
</dbReference>
<dbReference type="PANTHER" id="PTHR24271">
    <property type="entry name" value="KALLIKREIN-RELATED"/>
    <property type="match status" value="1"/>
</dbReference>
<dbReference type="Pfam" id="PF00089">
    <property type="entry name" value="Trypsin"/>
    <property type="match status" value="1"/>
</dbReference>
<dbReference type="PRINTS" id="PR00722">
    <property type="entry name" value="CHYMOTRYPSIN"/>
</dbReference>
<dbReference type="SMART" id="SM00020">
    <property type="entry name" value="Tryp_SPc"/>
    <property type="match status" value="1"/>
</dbReference>
<dbReference type="SUPFAM" id="SSF50494">
    <property type="entry name" value="Trypsin-like serine proteases"/>
    <property type="match status" value="1"/>
</dbReference>
<dbReference type="PROSITE" id="PS50240">
    <property type="entry name" value="TRYPSIN_DOM"/>
    <property type="match status" value="1"/>
</dbReference>
<dbReference type="PROSITE" id="PS00134">
    <property type="entry name" value="TRYPSIN_HIS"/>
    <property type="match status" value="1"/>
</dbReference>
<dbReference type="PROSITE" id="PS00135">
    <property type="entry name" value="TRYPSIN_SER"/>
    <property type="match status" value="1"/>
</dbReference>
<feature type="signal peptide" evidence="2">
    <location>
        <begin position="1" status="less than"/>
        <end position="11"/>
    </location>
</feature>
<feature type="propeptide" id="PRO_0000432785" evidence="1">
    <location>
        <begin position="12"/>
        <end position="17"/>
    </location>
</feature>
<feature type="chain" id="PRO_0000432786" description="Snake venom serine protease pictobin">
    <location>
        <begin position="18"/>
        <end position="250"/>
    </location>
</feature>
<feature type="domain" description="Peptidase S1" evidence="3">
    <location>
        <begin position="18"/>
        <end position="241"/>
    </location>
</feature>
<feature type="active site" description="Charge relay system" evidence="1">
    <location>
        <position position="57"/>
    </location>
</feature>
<feature type="active site" description="Charge relay system" evidence="1">
    <location>
        <position position="102"/>
    </location>
</feature>
<feature type="active site" description="Charge relay system" evidence="1">
    <location>
        <position position="196"/>
    </location>
</feature>
<feature type="glycosylation site" description="N-linked (GlcNAc...) asparagine" evidence="2">
    <location>
        <position position="71"/>
    </location>
</feature>
<feature type="glycosylation site" description="N-linked (GlcNAc...) asparagine" evidence="2">
    <location>
        <position position="95"/>
    </location>
</feature>
<feature type="glycosylation site" description="N-linked (GlcNAc...) asparagine" evidence="2">
    <location>
        <position position="146"/>
    </location>
</feature>
<feature type="glycosylation site" description="N-linked (GlcNAc...) asparagine" evidence="2">
    <location>
        <position position="162"/>
    </location>
</feature>
<feature type="glycosylation site" description="N-linked (GlcNAc...) asparagine" evidence="2">
    <location>
        <position position="243"/>
    </location>
</feature>
<feature type="disulfide bond" evidence="3">
    <location>
        <begin position="24"/>
        <end position="155"/>
    </location>
</feature>
<feature type="disulfide bond" evidence="3">
    <location>
        <begin position="42"/>
        <end position="58"/>
    </location>
</feature>
<feature type="disulfide bond" evidence="3">
    <location>
        <begin position="134"/>
        <end position="202"/>
    </location>
</feature>
<feature type="disulfide bond" evidence="3">
    <location>
        <begin position="166"/>
        <end position="181"/>
    </location>
</feature>
<feature type="disulfide bond" evidence="3">
    <location>
        <begin position="192"/>
        <end position="217"/>
    </location>
</feature>
<feature type="non-terminal residue">
    <location>
        <position position="1"/>
    </location>
</feature>
<accession>U5YCR8</accession>
<evidence type="ECO:0000250" key="1"/>
<evidence type="ECO:0000255" key="2"/>
<evidence type="ECO:0000255" key="3">
    <source>
        <dbReference type="PROSITE-ProRule" id="PRU00274"/>
    </source>
</evidence>
<evidence type="ECO:0000305" key="4"/>
<reference key="1">
    <citation type="submission" date="2013-07" db="EMBL/GenBank/DDBJ databases">
        <title>Molecular and biological study of the clotting enzyme from the Bothrops pictus venom.</title>
        <authorList>
            <person name="Vivas D.E."/>
            <person name="Sandoval G.A."/>
            <person name="Inga R.R."/>
            <person name="Yarleque A."/>
            <person name="Flores E."/>
        </authorList>
    </citation>
    <scope>NUCLEOTIDE SEQUENCE [MRNA]</scope>
</reference>
<name>VSP_BOTPC</name>